<dbReference type="EMBL" id="CP000449">
    <property type="protein sequence ID" value="ABI67282.1"/>
    <property type="molecule type" value="Genomic_DNA"/>
</dbReference>
<dbReference type="RefSeq" id="WP_011644926.1">
    <property type="nucleotide sequence ID" value="NC_008347.1"/>
</dbReference>
<dbReference type="SMR" id="Q0AKB1"/>
<dbReference type="STRING" id="394221.Mmar10_3001"/>
<dbReference type="KEGG" id="mmr:Mmar10_3001"/>
<dbReference type="eggNOG" id="COG0443">
    <property type="taxonomic scope" value="Bacteria"/>
</dbReference>
<dbReference type="HOGENOM" id="CLU_005965_2_1_5"/>
<dbReference type="OrthoDB" id="9766019at2"/>
<dbReference type="Proteomes" id="UP000001964">
    <property type="component" value="Chromosome"/>
</dbReference>
<dbReference type="GO" id="GO:0005524">
    <property type="term" value="F:ATP binding"/>
    <property type="evidence" value="ECO:0007669"/>
    <property type="project" value="UniProtKB-UniRule"/>
</dbReference>
<dbReference type="GO" id="GO:0140662">
    <property type="term" value="F:ATP-dependent protein folding chaperone"/>
    <property type="evidence" value="ECO:0007669"/>
    <property type="project" value="InterPro"/>
</dbReference>
<dbReference type="GO" id="GO:0051082">
    <property type="term" value="F:unfolded protein binding"/>
    <property type="evidence" value="ECO:0007669"/>
    <property type="project" value="InterPro"/>
</dbReference>
<dbReference type="FunFam" id="2.60.34.10:FF:000014">
    <property type="entry name" value="Chaperone protein DnaK HSP70"/>
    <property type="match status" value="1"/>
</dbReference>
<dbReference type="FunFam" id="3.30.420.40:FF:000020">
    <property type="entry name" value="Chaperone protein HscA homolog"/>
    <property type="match status" value="1"/>
</dbReference>
<dbReference type="FunFam" id="3.30.30.30:FF:000003">
    <property type="entry name" value="Heat shock protein 9"/>
    <property type="match status" value="1"/>
</dbReference>
<dbReference type="FunFam" id="1.20.1270.10:FF:000001">
    <property type="entry name" value="Molecular chaperone DnaK"/>
    <property type="match status" value="1"/>
</dbReference>
<dbReference type="FunFam" id="3.30.420.40:FF:000004">
    <property type="entry name" value="Molecular chaperone DnaK"/>
    <property type="match status" value="1"/>
</dbReference>
<dbReference type="FunFam" id="3.90.640.10:FF:000003">
    <property type="entry name" value="Molecular chaperone DnaK"/>
    <property type="match status" value="1"/>
</dbReference>
<dbReference type="Gene3D" id="1.20.1270.10">
    <property type="match status" value="1"/>
</dbReference>
<dbReference type="Gene3D" id="3.30.420.40">
    <property type="match status" value="2"/>
</dbReference>
<dbReference type="Gene3D" id="3.90.640.10">
    <property type="entry name" value="Actin, Chain A, domain 4"/>
    <property type="match status" value="1"/>
</dbReference>
<dbReference type="Gene3D" id="2.60.34.10">
    <property type="entry name" value="Substrate Binding Domain Of DNAk, Chain A, domain 1"/>
    <property type="match status" value="1"/>
</dbReference>
<dbReference type="HAMAP" id="MF_00332">
    <property type="entry name" value="DnaK"/>
    <property type="match status" value="1"/>
</dbReference>
<dbReference type="InterPro" id="IPR043129">
    <property type="entry name" value="ATPase_NBD"/>
</dbReference>
<dbReference type="InterPro" id="IPR012725">
    <property type="entry name" value="Chaperone_DnaK"/>
</dbReference>
<dbReference type="InterPro" id="IPR018181">
    <property type="entry name" value="Heat_shock_70_CS"/>
</dbReference>
<dbReference type="InterPro" id="IPR029048">
    <property type="entry name" value="HSP70_C_sf"/>
</dbReference>
<dbReference type="InterPro" id="IPR029047">
    <property type="entry name" value="HSP70_peptide-bd_sf"/>
</dbReference>
<dbReference type="InterPro" id="IPR013126">
    <property type="entry name" value="Hsp_70_fam"/>
</dbReference>
<dbReference type="NCBIfam" id="NF001413">
    <property type="entry name" value="PRK00290.1"/>
    <property type="match status" value="1"/>
</dbReference>
<dbReference type="NCBIfam" id="NF003520">
    <property type="entry name" value="PRK05183.1"/>
    <property type="match status" value="1"/>
</dbReference>
<dbReference type="NCBIfam" id="TIGR02350">
    <property type="entry name" value="prok_dnaK"/>
    <property type="match status" value="1"/>
</dbReference>
<dbReference type="PANTHER" id="PTHR19375">
    <property type="entry name" value="HEAT SHOCK PROTEIN 70KDA"/>
    <property type="match status" value="1"/>
</dbReference>
<dbReference type="Pfam" id="PF00012">
    <property type="entry name" value="HSP70"/>
    <property type="match status" value="1"/>
</dbReference>
<dbReference type="PRINTS" id="PR00301">
    <property type="entry name" value="HEATSHOCK70"/>
</dbReference>
<dbReference type="SUPFAM" id="SSF53067">
    <property type="entry name" value="Actin-like ATPase domain"/>
    <property type="match status" value="2"/>
</dbReference>
<dbReference type="SUPFAM" id="SSF100934">
    <property type="entry name" value="Heat shock protein 70kD (HSP70), C-terminal subdomain"/>
    <property type="match status" value="1"/>
</dbReference>
<dbReference type="SUPFAM" id="SSF100920">
    <property type="entry name" value="Heat shock protein 70kD (HSP70), peptide-binding domain"/>
    <property type="match status" value="1"/>
</dbReference>
<dbReference type="PROSITE" id="PS00297">
    <property type="entry name" value="HSP70_1"/>
    <property type="match status" value="1"/>
</dbReference>
<dbReference type="PROSITE" id="PS00329">
    <property type="entry name" value="HSP70_2"/>
    <property type="match status" value="1"/>
</dbReference>
<dbReference type="PROSITE" id="PS01036">
    <property type="entry name" value="HSP70_3"/>
    <property type="match status" value="1"/>
</dbReference>
<organism>
    <name type="scientific">Maricaulis maris (strain MCS10)</name>
    <name type="common">Caulobacter maris</name>
    <dbReference type="NCBI Taxonomy" id="394221"/>
    <lineage>
        <taxon>Bacteria</taxon>
        <taxon>Pseudomonadati</taxon>
        <taxon>Pseudomonadota</taxon>
        <taxon>Alphaproteobacteria</taxon>
        <taxon>Maricaulales</taxon>
        <taxon>Maricaulaceae</taxon>
        <taxon>Maricaulis</taxon>
    </lineage>
</organism>
<proteinExistence type="inferred from homology"/>
<evidence type="ECO:0000255" key="1">
    <source>
        <dbReference type="HAMAP-Rule" id="MF_00332"/>
    </source>
</evidence>
<evidence type="ECO:0000256" key="2">
    <source>
        <dbReference type="SAM" id="MobiDB-lite"/>
    </source>
</evidence>
<gene>
    <name evidence="1" type="primary">dnaK</name>
    <name type="ordered locus">Mmar10_3001</name>
</gene>
<sequence>MSKVIGIDLGTTNSCVAVMESGQPKVIENSEGVRTTPSVVAFTEDGERLIGQPAKRQAVTNPDYTFFAIKRLIGRMMDDPTVKKDIDMVPYKIVPSDSNDAWVQGRDKKYSPSEISAFTLQKMKETAESYLGEKVEKAVITVPAYFDDAQRQATKDAGKIAGLEVLRIINEPTAAALAYGLDKGENKTIAVFDLGGGTFDVSVLEIGDGVFEVKATNGDTFLGGEDFDMRIVQYLADEFKKENGIDLKSDKLALQRLKEEAEKAKKELSSATSYEVNLPFITADASGPKHLNIKLSRAKLEALVEDLVKRTLEPCKKALKDAGLSPSDIDDIVLVGGMTRMPKVQEAVKGFFGKDPHKGVNPDEVVAMGAAIQAGVLQGDVKDVLLLDVTPLSLGIETLGGVFTRLIDRNTTIPTKKSQTFSTADDNQTAVTIRVSQGEREMAADNKLLGQFDLVGIPPSPRGLPQIEVTFDIDANGIVNVSAKDKATGKEQQIRIQASGGLSDDDIEQMVKDAEANADADKKKKELVEAHNGAEAMIHQTEKQLEEFGDKVPGEDKDAIDAALTELKEVKDGEDLEAIQQKTQALVQAAMKLGEAMYAAQQTEAAEADAKSDAEGDEDVVDAEFSEVDDDKKKDA</sequence>
<reference key="1">
    <citation type="submission" date="2006-08" db="EMBL/GenBank/DDBJ databases">
        <title>Complete sequence of Maricaulis maris MCS10.</title>
        <authorList>
            <consortium name="US DOE Joint Genome Institute"/>
            <person name="Copeland A."/>
            <person name="Lucas S."/>
            <person name="Lapidus A."/>
            <person name="Barry K."/>
            <person name="Detter J.C."/>
            <person name="Glavina del Rio T."/>
            <person name="Hammon N."/>
            <person name="Israni S."/>
            <person name="Dalin E."/>
            <person name="Tice H."/>
            <person name="Pitluck S."/>
            <person name="Saunders E."/>
            <person name="Brettin T."/>
            <person name="Bruce D."/>
            <person name="Han C."/>
            <person name="Tapia R."/>
            <person name="Gilna P."/>
            <person name="Schmutz J."/>
            <person name="Larimer F."/>
            <person name="Land M."/>
            <person name="Hauser L."/>
            <person name="Kyrpides N."/>
            <person name="Mikhailova N."/>
            <person name="Viollier P."/>
            <person name="Stephens C."/>
            <person name="Richardson P."/>
        </authorList>
    </citation>
    <scope>NUCLEOTIDE SEQUENCE [LARGE SCALE GENOMIC DNA]</scope>
    <source>
        <strain>MCS10</strain>
    </source>
</reference>
<protein>
    <recommendedName>
        <fullName evidence="1">Chaperone protein DnaK</fullName>
    </recommendedName>
    <alternativeName>
        <fullName evidence="1">HSP70</fullName>
    </alternativeName>
    <alternativeName>
        <fullName evidence="1">Heat shock 70 kDa protein</fullName>
    </alternativeName>
    <alternativeName>
        <fullName evidence="1">Heat shock protein 70</fullName>
    </alternativeName>
</protein>
<feature type="chain" id="PRO_1000059598" description="Chaperone protein DnaK">
    <location>
        <begin position="1"/>
        <end position="636"/>
    </location>
</feature>
<feature type="region of interest" description="Disordered" evidence="2">
    <location>
        <begin position="600"/>
        <end position="636"/>
    </location>
</feature>
<feature type="compositionally biased region" description="Acidic residues" evidence="2">
    <location>
        <begin position="615"/>
        <end position="629"/>
    </location>
</feature>
<feature type="modified residue" description="Phosphothreonine; by autocatalysis" evidence="1">
    <location>
        <position position="198"/>
    </location>
</feature>
<name>DNAK_MARMM</name>
<accession>Q0AKB1</accession>
<keyword id="KW-0067">ATP-binding</keyword>
<keyword id="KW-0143">Chaperone</keyword>
<keyword id="KW-0547">Nucleotide-binding</keyword>
<keyword id="KW-0597">Phosphoprotein</keyword>
<keyword id="KW-1185">Reference proteome</keyword>
<keyword id="KW-0346">Stress response</keyword>
<comment type="function">
    <text evidence="1">Acts as a chaperone.</text>
</comment>
<comment type="induction">
    <text evidence="1">By stress conditions e.g. heat shock.</text>
</comment>
<comment type="similarity">
    <text evidence="1">Belongs to the heat shock protein 70 family.</text>
</comment>